<proteinExistence type="inferred from homology"/>
<evidence type="ECO:0000255" key="1">
    <source>
        <dbReference type="HAMAP-Rule" id="MF_00735"/>
    </source>
</evidence>
<dbReference type="EC" id="2.1.1.-" evidence="1"/>
<dbReference type="EMBL" id="CP001083">
    <property type="protein sequence ID" value="ACQ52852.1"/>
    <property type="molecule type" value="Genomic_DNA"/>
</dbReference>
<dbReference type="RefSeq" id="WP_003359984.1">
    <property type="nucleotide sequence ID" value="NC_012658.1"/>
</dbReference>
<dbReference type="SMR" id="C3L3G5"/>
<dbReference type="KEGG" id="cbi:CLJ_B3214"/>
<dbReference type="HOGENOM" id="CLU_049382_0_1_9"/>
<dbReference type="Proteomes" id="UP000002333">
    <property type="component" value="Chromosome"/>
</dbReference>
<dbReference type="GO" id="GO:0005737">
    <property type="term" value="C:cytoplasm"/>
    <property type="evidence" value="ECO:0007669"/>
    <property type="project" value="UniProtKB-SubCell"/>
</dbReference>
<dbReference type="GO" id="GO:0016279">
    <property type="term" value="F:protein-lysine N-methyltransferase activity"/>
    <property type="evidence" value="ECO:0007669"/>
    <property type="project" value="RHEA"/>
</dbReference>
<dbReference type="GO" id="GO:0032259">
    <property type="term" value="P:methylation"/>
    <property type="evidence" value="ECO:0007669"/>
    <property type="project" value="UniProtKB-KW"/>
</dbReference>
<dbReference type="CDD" id="cd02440">
    <property type="entry name" value="AdoMet_MTases"/>
    <property type="match status" value="1"/>
</dbReference>
<dbReference type="Gene3D" id="3.40.50.150">
    <property type="entry name" value="Vaccinia Virus protein VP39"/>
    <property type="match status" value="1"/>
</dbReference>
<dbReference type="HAMAP" id="MF_00735">
    <property type="entry name" value="Methyltr_PrmA"/>
    <property type="match status" value="1"/>
</dbReference>
<dbReference type="InterPro" id="IPR050078">
    <property type="entry name" value="Ribosomal_L11_MeTrfase_PrmA"/>
</dbReference>
<dbReference type="InterPro" id="IPR004498">
    <property type="entry name" value="Ribosomal_PrmA_MeTrfase"/>
</dbReference>
<dbReference type="InterPro" id="IPR029063">
    <property type="entry name" value="SAM-dependent_MTases_sf"/>
</dbReference>
<dbReference type="NCBIfam" id="TIGR00406">
    <property type="entry name" value="prmA"/>
    <property type="match status" value="1"/>
</dbReference>
<dbReference type="PANTHER" id="PTHR43648">
    <property type="entry name" value="ELECTRON TRANSFER FLAVOPROTEIN BETA SUBUNIT LYSINE METHYLTRANSFERASE"/>
    <property type="match status" value="1"/>
</dbReference>
<dbReference type="PANTHER" id="PTHR43648:SF1">
    <property type="entry name" value="ELECTRON TRANSFER FLAVOPROTEIN BETA SUBUNIT LYSINE METHYLTRANSFERASE"/>
    <property type="match status" value="1"/>
</dbReference>
<dbReference type="Pfam" id="PF06325">
    <property type="entry name" value="PrmA"/>
    <property type="match status" value="1"/>
</dbReference>
<dbReference type="PIRSF" id="PIRSF000401">
    <property type="entry name" value="RPL11_MTase"/>
    <property type="match status" value="1"/>
</dbReference>
<dbReference type="SUPFAM" id="SSF53335">
    <property type="entry name" value="S-adenosyl-L-methionine-dependent methyltransferases"/>
    <property type="match status" value="1"/>
</dbReference>
<accession>C3L3G5</accession>
<organism>
    <name type="scientific">Clostridium botulinum (strain 657 / Type Ba4)</name>
    <dbReference type="NCBI Taxonomy" id="515621"/>
    <lineage>
        <taxon>Bacteria</taxon>
        <taxon>Bacillati</taxon>
        <taxon>Bacillota</taxon>
        <taxon>Clostridia</taxon>
        <taxon>Eubacteriales</taxon>
        <taxon>Clostridiaceae</taxon>
        <taxon>Clostridium</taxon>
    </lineage>
</organism>
<feature type="chain" id="PRO_1000212744" description="Ribosomal protein L11 methyltransferase">
    <location>
        <begin position="1"/>
        <end position="312"/>
    </location>
</feature>
<feature type="binding site" evidence="1">
    <location>
        <position position="163"/>
    </location>
    <ligand>
        <name>S-adenosyl-L-methionine</name>
        <dbReference type="ChEBI" id="CHEBI:59789"/>
    </ligand>
</feature>
<feature type="binding site" evidence="1">
    <location>
        <position position="184"/>
    </location>
    <ligand>
        <name>S-adenosyl-L-methionine</name>
        <dbReference type="ChEBI" id="CHEBI:59789"/>
    </ligand>
</feature>
<feature type="binding site" evidence="1">
    <location>
        <position position="206"/>
    </location>
    <ligand>
        <name>S-adenosyl-L-methionine</name>
        <dbReference type="ChEBI" id="CHEBI:59789"/>
    </ligand>
</feature>
<feature type="binding site" evidence="1">
    <location>
        <position position="248"/>
    </location>
    <ligand>
        <name>S-adenosyl-L-methionine</name>
        <dbReference type="ChEBI" id="CHEBI:59789"/>
    </ligand>
</feature>
<protein>
    <recommendedName>
        <fullName evidence="1">Ribosomal protein L11 methyltransferase</fullName>
        <shortName evidence="1">L11 Mtase</shortName>
        <ecNumber evidence="1">2.1.1.-</ecNumber>
    </recommendedName>
</protein>
<gene>
    <name evidence="1" type="primary">prmA</name>
    <name type="ordered locus">CLJ_B3214</name>
</gene>
<reference key="1">
    <citation type="submission" date="2008-05" db="EMBL/GenBank/DDBJ databases">
        <title>Genome sequence of Clostridium botulinum Ba4 strain 657.</title>
        <authorList>
            <person name="Shrivastava S."/>
            <person name="Brown J.L."/>
            <person name="Bruce D."/>
            <person name="Detter C."/>
            <person name="Munk C."/>
            <person name="Smith L.A."/>
            <person name="Smith T.J."/>
            <person name="Sutton G."/>
            <person name="Brettin T.S."/>
        </authorList>
    </citation>
    <scope>NUCLEOTIDE SEQUENCE [LARGE SCALE GENOMIC DNA]</scope>
    <source>
        <strain>657 / Type Ba4</strain>
    </source>
</reference>
<name>PRMA_CLOB6</name>
<comment type="function">
    <text evidence="1">Methylates ribosomal protein L11.</text>
</comment>
<comment type="catalytic activity">
    <reaction evidence="1">
        <text>L-lysyl-[protein] + 3 S-adenosyl-L-methionine = N(6),N(6),N(6)-trimethyl-L-lysyl-[protein] + 3 S-adenosyl-L-homocysteine + 3 H(+)</text>
        <dbReference type="Rhea" id="RHEA:54192"/>
        <dbReference type="Rhea" id="RHEA-COMP:9752"/>
        <dbReference type="Rhea" id="RHEA-COMP:13826"/>
        <dbReference type="ChEBI" id="CHEBI:15378"/>
        <dbReference type="ChEBI" id="CHEBI:29969"/>
        <dbReference type="ChEBI" id="CHEBI:57856"/>
        <dbReference type="ChEBI" id="CHEBI:59789"/>
        <dbReference type="ChEBI" id="CHEBI:61961"/>
    </reaction>
</comment>
<comment type="subcellular location">
    <subcellularLocation>
        <location evidence="1">Cytoplasm</location>
    </subcellularLocation>
</comment>
<comment type="similarity">
    <text evidence="1">Belongs to the methyltransferase superfamily. PrmA family.</text>
</comment>
<keyword id="KW-0963">Cytoplasm</keyword>
<keyword id="KW-0489">Methyltransferase</keyword>
<keyword id="KW-0949">S-adenosyl-L-methionine</keyword>
<keyword id="KW-0808">Transferase</keyword>
<sequence>MDKEWLEVCIYTSSEALEAISGILYNTGVKGVSIEDPKDIEFKKKHPGDWDYFDETLLKVKDTAIVKGYYKEDDKFNEYLDYIKKSVSNLDQFGIDKGKGLVEVHKVNEEDWENNWKKYYKPTKVSNKIVIKPIWENYDKKQEEIIVELDPGMAFGTGTHETTRMCINALEKHIKEDRTVFDIGCGSGILSIAAAKLGAKHVIGVDLDPVAVKSSKENIKYNNLDNIEILEGNLMEVVEGRANIVVANIIADVIIFLTEGVKAFIEKDGYFIASGIINSRKEDVIKKLEETGFVIEEVREEGEWVCIVSKIN</sequence>